<feature type="chain" id="PRO_1000083520" description="DNA mismatch repair protein MutH">
    <location>
        <begin position="1"/>
        <end position="229"/>
    </location>
</feature>
<keyword id="KW-0963">Cytoplasm</keyword>
<keyword id="KW-0227">DNA damage</keyword>
<keyword id="KW-0234">DNA repair</keyword>
<keyword id="KW-0255">Endonuclease</keyword>
<keyword id="KW-0378">Hydrolase</keyword>
<keyword id="KW-0540">Nuclease</keyword>
<reference key="1">
    <citation type="submission" date="2008-02" db="EMBL/GenBank/DDBJ databases">
        <title>Complete sequence of Escherichia coli C str. ATCC 8739.</title>
        <authorList>
            <person name="Copeland A."/>
            <person name="Lucas S."/>
            <person name="Lapidus A."/>
            <person name="Glavina del Rio T."/>
            <person name="Dalin E."/>
            <person name="Tice H."/>
            <person name="Bruce D."/>
            <person name="Goodwin L."/>
            <person name="Pitluck S."/>
            <person name="Kiss H."/>
            <person name="Brettin T."/>
            <person name="Detter J.C."/>
            <person name="Han C."/>
            <person name="Kuske C.R."/>
            <person name="Schmutz J."/>
            <person name="Larimer F."/>
            <person name="Land M."/>
            <person name="Hauser L."/>
            <person name="Kyrpides N."/>
            <person name="Mikhailova N."/>
            <person name="Ingram L."/>
            <person name="Richardson P."/>
        </authorList>
    </citation>
    <scope>NUCLEOTIDE SEQUENCE [LARGE SCALE GENOMIC DNA]</scope>
    <source>
        <strain>ATCC 8739 / DSM 1576 / NBRC 3972 / NCIMB 8545 / WDCM 00012 / Crooks</strain>
    </source>
</reference>
<sequence>MSQPRPLLSPPETEEQLLAQAQQLSGYTLGELAALAGLVTPENLKRDKGWIGVLLEIWLGASAGSKPEQDFAALGVELKTIPVDSLGRPLETTFVCVAPLTGNSGVTWETSHVRHKLKRVLWIPVEGERSIPLAQRRVGSPLLWSPNEEEDRQLREDWEELMDMIVLGQVERITARHGEYLQIRPKAANAKALTEAIGARGERILTLPRGFYLKKNFTSALLARHFLIQ</sequence>
<evidence type="ECO:0000255" key="1">
    <source>
        <dbReference type="HAMAP-Rule" id="MF_00759"/>
    </source>
</evidence>
<accession>B1IU13</accession>
<proteinExistence type="inferred from homology"/>
<organism>
    <name type="scientific">Escherichia coli (strain ATCC 8739 / DSM 1576 / NBRC 3972 / NCIMB 8545 / WDCM 00012 / Crooks)</name>
    <dbReference type="NCBI Taxonomy" id="481805"/>
    <lineage>
        <taxon>Bacteria</taxon>
        <taxon>Pseudomonadati</taxon>
        <taxon>Pseudomonadota</taxon>
        <taxon>Gammaproteobacteria</taxon>
        <taxon>Enterobacterales</taxon>
        <taxon>Enterobacteriaceae</taxon>
        <taxon>Escherichia</taxon>
    </lineage>
</organism>
<protein>
    <recommendedName>
        <fullName evidence="1">DNA mismatch repair protein MutH</fullName>
    </recommendedName>
    <alternativeName>
        <fullName evidence="1">Methyl-directed mismatch repair protein</fullName>
    </alternativeName>
</protein>
<comment type="function">
    <text evidence="1">Sequence-specific endonuclease that cleaves unmethylated GATC sequences. It is involved in DNA mismatch repair.</text>
</comment>
<comment type="subcellular location">
    <subcellularLocation>
        <location evidence="1">Cytoplasm</location>
    </subcellularLocation>
</comment>
<comment type="similarity">
    <text evidence="1">Belongs to the MutH family.</text>
</comment>
<name>MUTH_ECOLC</name>
<dbReference type="EMBL" id="CP000946">
    <property type="protein sequence ID" value="ACA76553.1"/>
    <property type="molecule type" value="Genomic_DNA"/>
</dbReference>
<dbReference type="RefSeq" id="WP_000082188.1">
    <property type="nucleotide sequence ID" value="NZ_MTFT01000004.1"/>
</dbReference>
<dbReference type="SMR" id="B1IU13"/>
<dbReference type="GeneID" id="93779167"/>
<dbReference type="KEGG" id="ecl:EcolC_0884"/>
<dbReference type="HOGENOM" id="CLU_086669_0_0_6"/>
<dbReference type="GO" id="GO:0005737">
    <property type="term" value="C:cytoplasm"/>
    <property type="evidence" value="ECO:0007669"/>
    <property type="project" value="UniProtKB-SubCell"/>
</dbReference>
<dbReference type="GO" id="GO:0003677">
    <property type="term" value="F:DNA binding"/>
    <property type="evidence" value="ECO:0007669"/>
    <property type="project" value="InterPro"/>
</dbReference>
<dbReference type="GO" id="GO:0004519">
    <property type="term" value="F:endonuclease activity"/>
    <property type="evidence" value="ECO:0007669"/>
    <property type="project" value="UniProtKB-UniRule"/>
</dbReference>
<dbReference type="GO" id="GO:0006304">
    <property type="term" value="P:DNA modification"/>
    <property type="evidence" value="ECO:0007669"/>
    <property type="project" value="InterPro"/>
</dbReference>
<dbReference type="GO" id="GO:0006298">
    <property type="term" value="P:mismatch repair"/>
    <property type="evidence" value="ECO:0007669"/>
    <property type="project" value="UniProtKB-UniRule"/>
</dbReference>
<dbReference type="CDD" id="cd00583">
    <property type="entry name" value="MutH-like"/>
    <property type="match status" value="1"/>
</dbReference>
<dbReference type="FunFam" id="3.40.600.10:FF:000001">
    <property type="entry name" value="DNA mismatch repair protein MutH"/>
    <property type="match status" value="1"/>
</dbReference>
<dbReference type="Gene3D" id="3.40.600.10">
    <property type="entry name" value="DNA mismatch repair MutH/Restriction endonuclease, type II"/>
    <property type="match status" value="1"/>
</dbReference>
<dbReference type="HAMAP" id="MF_00759">
    <property type="entry name" value="MutH"/>
    <property type="match status" value="1"/>
</dbReference>
<dbReference type="InterPro" id="IPR004230">
    <property type="entry name" value="DNA_mismatch_repair_MutH"/>
</dbReference>
<dbReference type="InterPro" id="IPR011337">
    <property type="entry name" value="DNA_rep_MutH/RE_typeII_Sau3AI"/>
</dbReference>
<dbReference type="InterPro" id="IPR037057">
    <property type="entry name" value="DNA_rep_MutH/T2_RE_sf"/>
</dbReference>
<dbReference type="InterPro" id="IPR011335">
    <property type="entry name" value="Restrct_endonuc-II-like"/>
</dbReference>
<dbReference type="NCBIfam" id="TIGR02248">
    <property type="entry name" value="mutH_TIGR"/>
    <property type="match status" value="1"/>
</dbReference>
<dbReference type="NCBIfam" id="NF003458">
    <property type="entry name" value="PRK05070.1"/>
    <property type="match status" value="1"/>
</dbReference>
<dbReference type="Pfam" id="PF02976">
    <property type="entry name" value="MutH"/>
    <property type="match status" value="1"/>
</dbReference>
<dbReference type="SMART" id="SM00927">
    <property type="entry name" value="MutH"/>
    <property type="match status" value="1"/>
</dbReference>
<dbReference type="SUPFAM" id="SSF52980">
    <property type="entry name" value="Restriction endonuclease-like"/>
    <property type="match status" value="1"/>
</dbReference>
<gene>
    <name evidence="1" type="primary">mutH</name>
    <name type="ordered locus">EcolC_0884</name>
</gene>